<reference key="1">
    <citation type="journal article" date="2009" name="Nat. Biotechnol.">
        <title>Genome sequence of the recombinant protein production host Pichia pastoris.</title>
        <authorList>
            <person name="De Schutter K."/>
            <person name="Lin Y.-C."/>
            <person name="Tiels P."/>
            <person name="Van Hecke A."/>
            <person name="Glinka S."/>
            <person name="Weber-Lehmann J."/>
            <person name="Rouze P."/>
            <person name="Van de Peer Y."/>
            <person name="Callewaert N."/>
        </authorList>
    </citation>
    <scope>NUCLEOTIDE SEQUENCE [LARGE SCALE GENOMIC DNA]</scope>
    <source>
        <strain>GS115 / ATCC 20864</strain>
    </source>
</reference>
<organism>
    <name type="scientific">Komagataella phaffii (strain GS115 / ATCC 20864)</name>
    <name type="common">Yeast</name>
    <name type="synonym">Pichia pastoris</name>
    <dbReference type="NCBI Taxonomy" id="644223"/>
    <lineage>
        <taxon>Eukaryota</taxon>
        <taxon>Fungi</taxon>
        <taxon>Dikarya</taxon>
        <taxon>Ascomycota</taxon>
        <taxon>Saccharomycotina</taxon>
        <taxon>Pichiomycetes</taxon>
        <taxon>Pichiales</taxon>
        <taxon>Pichiaceae</taxon>
        <taxon>Komagataella</taxon>
    </lineage>
</organism>
<gene>
    <name type="primary">ERT1</name>
    <name type="ordered locus">PAS_chr2-1_0732</name>
</gene>
<name>ERT1_KOMPG</name>
<evidence type="ECO:0000250" key="1"/>
<evidence type="ECO:0000255" key="2">
    <source>
        <dbReference type="PROSITE-ProRule" id="PRU00227"/>
    </source>
</evidence>
<evidence type="ECO:0000256" key="3">
    <source>
        <dbReference type="SAM" id="MobiDB-lite"/>
    </source>
</evidence>
<evidence type="ECO:0000305" key="4"/>
<sequence>MVDKATTERKLKAPLSGRKRVPKKTAHACNYCHQAHMTCDDSRPCKRCIQRNLADSCRDAPRKKKKYLMDIPDEVADPSAQQLTPDAVMGPSPSTMTLSQSNAFMSSAADLEYSILGNIIHQDSGQFVGTDGTVISPSISTSDDNSHITPLAHYNGAIQGPAVYTKSPLNFEGSYAMTPIQRRTDINEIQPDLLRSEPSSNDTFGPTLHGEEPSCDSSTNQYFIGPSFSSDGRAQTLTFPYVVSQIERTKRYNPKEFRRRNKKSAISFSVGLMTDESSDKRDESITGLVYHEPSEIYSKIKRPYSYPQYYHSLILYLRKRFDKESLVAMSKAMAEYRPSFIAGTMNLKEDDLIFTEQCFQRTLLEYDNYISISGTPTVVWRRTSQLAYVGSEFCVLTGWSKEQLLGRSTFIVEILDDKSVLDYFELFSKIAFGDFRGATMTECTLLTPDGKKIRTSSIWTLKRDVFGIPMMVIANFLPILT</sequence>
<dbReference type="EMBL" id="FN392320">
    <property type="protein sequence ID" value="CAY69382.1"/>
    <property type="molecule type" value="Genomic_DNA"/>
</dbReference>
<dbReference type="RefSeq" id="XP_002491662.1">
    <property type="nucleotide sequence ID" value="XM_002491617.1"/>
</dbReference>
<dbReference type="SMR" id="C4R1K8"/>
<dbReference type="FunCoup" id="C4R1K8">
    <property type="interactions" value="246"/>
</dbReference>
<dbReference type="EnsemblFungi" id="CAY69382">
    <property type="protein sequence ID" value="CAY69382"/>
    <property type="gene ID" value="PAS_chr2-1_0732"/>
</dbReference>
<dbReference type="GeneID" id="8198350"/>
<dbReference type="KEGG" id="ppa:PAS_chr2-1_0732"/>
<dbReference type="eggNOG" id="ENOG502R1M5">
    <property type="taxonomic scope" value="Eukaryota"/>
</dbReference>
<dbReference type="HOGENOM" id="CLU_010748_2_3_1"/>
<dbReference type="InParanoid" id="C4R1K8"/>
<dbReference type="OMA" id="CVWTLKR"/>
<dbReference type="OrthoDB" id="2538135at2759"/>
<dbReference type="Proteomes" id="UP000000314">
    <property type="component" value="Chromosome 2"/>
</dbReference>
<dbReference type="GO" id="GO:0005634">
    <property type="term" value="C:nucleus"/>
    <property type="evidence" value="ECO:0007669"/>
    <property type="project" value="UniProtKB-SubCell"/>
</dbReference>
<dbReference type="GO" id="GO:0001227">
    <property type="term" value="F:DNA-binding transcription repressor activity, RNA polymerase II-specific"/>
    <property type="evidence" value="ECO:0007669"/>
    <property type="project" value="EnsemblFungi"/>
</dbReference>
<dbReference type="GO" id="GO:0000977">
    <property type="term" value="F:RNA polymerase II transcription regulatory region sequence-specific DNA binding"/>
    <property type="evidence" value="ECO:0007669"/>
    <property type="project" value="TreeGrafter"/>
</dbReference>
<dbReference type="GO" id="GO:0008270">
    <property type="term" value="F:zinc ion binding"/>
    <property type="evidence" value="ECO:0007669"/>
    <property type="project" value="InterPro"/>
</dbReference>
<dbReference type="GO" id="GO:0045991">
    <property type="term" value="P:carbon catabolite activation of transcription"/>
    <property type="evidence" value="ECO:0007669"/>
    <property type="project" value="EnsemblFungi"/>
</dbReference>
<dbReference type="GO" id="GO:0045013">
    <property type="term" value="P:carbon catabolite repression of transcription"/>
    <property type="evidence" value="ECO:0007669"/>
    <property type="project" value="EnsemblFungi"/>
</dbReference>
<dbReference type="GO" id="GO:0009267">
    <property type="term" value="P:cellular response to starvation"/>
    <property type="evidence" value="ECO:0007669"/>
    <property type="project" value="TreeGrafter"/>
</dbReference>
<dbReference type="GO" id="GO:0006094">
    <property type="term" value="P:gluconeogenesis"/>
    <property type="evidence" value="ECO:0007669"/>
    <property type="project" value="UniProtKB-KW"/>
</dbReference>
<dbReference type="GO" id="GO:0045722">
    <property type="term" value="P:positive regulation of gluconeogenesis"/>
    <property type="evidence" value="ECO:0007669"/>
    <property type="project" value="EnsemblFungi"/>
</dbReference>
<dbReference type="GO" id="GO:0045944">
    <property type="term" value="P:positive regulation of transcription by RNA polymerase II"/>
    <property type="evidence" value="ECO:0007669"/>
    <property type="project" value="EnsemblFungi"/>
</dbReference>
<dbReference type="CDD" id="cd00067">
    <property type="entry name" value="GAL4"/>
    <property type="match status" value="1"/>
</dbReference>
<dbReference type="CDD" id="cd00130">
    <property type="entry name" value="PAS"/>
    <property type="match status" value="1"/>
</dbReference>
<dbReference type="Gene3D" id="4.10.240.10">
    <property type="entry name" value="Zn(2)-C6 fungal-type DNA-binding domain"/>
    <property type="match status" value="1"/>
</dbReference>
<dbReference type="InterPro" id="IPR050335">
    <property type="entry name" value="ERT1_acuK_gluconeogen_tf"/>
</dbReference>
<dbReference type="InterPro" id="IPR000014">
    <property type="entry name" value="PAS"/>
</dbReference>
<dbReference type="InterPro" id="IPR035965">
    <property type="entry name" value="PAS-like_dom_sf"/>
</dbReference>
<dbReference type="InterPro" id="IPR056751">
    <property type="entry name" value="PAS_13"/>
</dbReference>
<dbReference type="InterPro" id="IPR036864">
    <property type="entry name" value="Zn2-C6_fun-type_DNA-bd_sf"/>
</dbReference>
<dbReference type="InterPro" id="IPR001138">
    <property type="entry name" value="Zn2Cys6_DnaBD"/>
</dbReference>
<dbReference type="PANTHER" id="PTHR47659:SF1">
    <property type="entry name" value="TRANSCRIPTION ACTIVATOR OF GLUCONEOGENESIS ERT1"/>
    <property type="match status" value="1"/>
</dbReference>
<dbReference type="PANTHER" id="PTHR47659">
    <property type="entry name" value="ZN(II)2CYS6 TRANSCRIPTION FACTOR (EUROFUNG)-RELATED"/>
    <property type="match status" value="1"/>
</dbReference>
<dbReference type="Pfam" id="PF24990">
    <property type="entry name" value="PAS_13"/>
    <property type="match status" value="2"/>
</dbReference>
<dbReference type="Pfam" id="PF00172">
    <property type="entry name" value="Zn_clus"/>
    <property type="match status" value="1"/>
</dbReference>
<dbReference type="SMART" id="SM00066">
    <property type="entry name" value="GAL4"/>
    <property type="match status" value="1"/>
</dbReference>
<dbReference type="SUPFAM" id="SSF55785">
    <property type="entry name" value="PYP-like sensor domain (PAS domain)"/>
    <property type="match status" value="1"/>
</dbReference>
<dbReference type="SUPFAM" id="SSF57701">
    <property type="entry name" value="Zn2/Cys6 DNA-binding domain"/>
    <property type="match status" value="1"/>
</dbReference>
<dbReference type="PROSITE" id="PS00463">
    <property type="entry name" value="ZN2_CY6_FUNGAL_1"/>
    <property type="match status" value="1"/>
</dbReference>
<dbReference type="PROSITE" id="PS50048">
    <property type="entry name" value="ZN2_CY6_FUNGAL_2"/>
    <property type="match status" value="1"/>
</dbReference>
<proteinExistence type="inferred from homology"/>
<accession>C4R1K8</accession>
<protein>
    <recommendedName>
        <fullName>Transcription activator of gluconeogenesis ERT1</fullName>
    </recommendedName>
</protein>
<keyword id="KW-0010">Activator</keyword>
<keyword id="KW-0238">DNA-binding</keyword>
<keyword id="KW-0312">Gluconeogenesis</keyword>
<keyword id="KW-0479">Metal-binding</keyword>
<keyword id="KW-0539">Nucleus</keyword>
<keyword id="KW-1185">Reference proteome</keyword>
<keyword id="KW-0804">Transcription</keyword>
<keyword id="KW-0805">Transcription regulation</keyword>
<keyword id="KW-0862">Zinc</keyword>
<comment type="function">
    <text evidence="1">Transcription factor which regulates nonfermentable carbon utilization. Activator of gluconeogenetic genes (By similarity).</text>
</comment>
<comment type="subcellular location">
    <subcellularLocation>
        <location evidence="2">Nucleus</location>
    </subcellularLocation>
</comment>
<comment type="similarity">
    <text evidence="4">Belongs to the ERT1/acuK family.</text>
</comment>
<feature type="chain" id="PRO_0000406466" description="Transcription activator of gluconeogenesis ERT1">
    <location>
        <begin position="1"/>
        <end position="481"/>
    </location>
</feature>
<feature type="domain" description="PAS">
    <location>
        <begin position="362"/>
        <end position="434"/>
    </location>
</feature>
<feature type="DNA-binding region" description="Zn(2)-C6 fungal-type" evidence="2">
    <location>
        <begin position="29"/>
        <end position="57"/>
    </location>
</feature>
<feature type="region of interest" description="Disordered" evidence="3">
    <location>
        <begin position="193"/>
        <end position="217"/>
    </location>
</feature>